<comment type="function">
    <text evidence="1">Regulates membrane-cell wall junctions and localized cell wall deposition. Required for establishment of the Casparian strip membrane domain (CSD) and the subsequent formation of Casparian strips, a cell wall modification of the root endodermis that determines an apoplastic barrier between the intraorganismal apoplasm and the extraorganismal apoplasm and prevents lateral diffusion (By similarity).</text>
</comment>
<comment type="subunit">
    <text evidence="1">Homodimer and heterodimers.</text>
</comment>
<comment type="subcellular location">
    <subcellularLocation>
        <location evidence="1">Cell membrane</location>
        <topology evidence="1">Multi-pass membrane protein</topology>
    </subcellularLocation>
    <text evidence="1">Very restricted localization following a belt shape within the plasma membrane which coincides with the position of the Casparian strip membrane domain in the root endodermis.</text>
</comment>
<comment type="similarity">
    <text evidence="3">Belongs to the Casparian strip membrane proteins (CASP) family.</text>
</comment>
<reference key="1">
    <citation type="journal article" date="2011" name="Nature">
        <title>The Medicago genome provides insight into the evolution of rhizobial symbioses.</title>
        <authorList>
            <person name="Young N.D."/>
            <person name="Debelle F."/>
            <person name="Oldroyd G.E.D."/>
            <person name="Geurts R."/>
            <person name="Cannon S.B."/>
            <person name="Udvardi M.K."/>
            <person name="Benedito V.A."/>
            <person name="Mayer K.F.X."/>
            <person name="Gouzy J."/>
            <person name="Schoof H."/>
            <person name="Van de Peer Y."/>
            <person name="Proost S."/>
            <person name="Cook D.R."/>
            <person name="Meyers B.C."/>
            <person name="Spannagl M."/>
            <person name="Cheung F."/>
            <person name="De Mita S."/>
            <person name="Krishnakumar V."/>
            <person name="Gundlach H."/>
            <person name="Zhou S."/>
            <person name="Mudge J."/>
            <person name="Bharti A.K."/>
            <person name="Murray J.D."/>
            <person name="Naoumkina M.A."/>
            <person name="Rosen B."/>
            <person name="Silverstein K.A.T."/>
            <person name="Tang H."/>
            <person name="Rombauts S."/>
            <person name="Zhao P.X."/>
            <person name="Zhou P."/>
            <person name="Barbe V."/>
            <person name="Bardou P."/>
            <person name="Bechner M."/>
            <person name="Bellec A."/>
            <person name="Berger A."/>
            <person name="Berges H."/>
            <person name="Bidwell S."/>
            <person name="Bisseling T."/>
            <person name="Choisne N."/>
            <person name="Couloux A."/>
            <person name="Denny R."/>
            <person name="Deshpande S."/>
            <person name="Dai X."/>
            <person name="Doyle J.J."/>
            <person name="Dudez A.-M."/>
            <person name="Farmer A.D."/>
            <person name="Fouteau S."/>
            <person name="Franken C."/>
            <person name="Gibelin C."/>
            <person name="Gish J."/>
            <person name="Goldstein S."/>
            <person name="Gonzalez A.J."/>
            <person name="Green P.J."/>
            <person name="Hallab A."/>
            <person name="Hartog M."/>
            <person name="Hua A."/>
            <person name="Humphray S.J."/>
            <person name="Jeong D.-H."/>
            <person name="Jing Y."/>
            <person name="Jocker A."/>
            <person name="Kenton S.M."/>
            <person name="Kim D.-J."/>
            <person name="Klee K."/>
            <person name="Lai H."/>
            <person name="Lang C."/>
            <person name="Lin S."/>
            <person name="Macmil S.L."/>
            <person name="Magdelenat G."/>
            <person name="Matthews L."/>
            <person name="McCorrison J."/>
            <person name="Monaghan E.L."/>
            <person name="Mun J.-H."/>
            <person name="Najar F.Z."/>
            <person name="Nicholson C."/>
            <person name="Noirot C."/>
            <person name="O'Bleness M."/>
            <person name="Paule C.R."/>
            <person name="Poulain J."/>
            <person name="Prion F."/>
            <person name="Qin B."/>
            <person name="Qu C."/>
            <person name="Retzel E.F."/>
            <person name="Riddle C."/>
            <person name="Sallet E."/>
            <person name="Samain S."/>
            <person name="Samson N."/>
            <person name="Sanders I."/>
            <person name="Saurat O."/>
            <person name="Scarpelli C."/>
            <person name="Schiex T."/>
            <person name="Segurens B."/>
            <person name="Severin A.J."/>
            <person name="Sherrier D.J."/>
            <person name="Shi R."/>
            <person name="Sims S."/>
            <person name="Singer S.R."/>
            <person name="Sinharoy S."/>
            <person name="Sterck L."/>
            <person name="Viollet A."/>
            <person name="Wang B.-B."/>
            <person name="Wang K."/>
            <person name="Wang M."/>
            <person name="Wang X."/>
            <person name="Warfsmann J."/>
            <person name="Weissenbach J."/>
            <person name="White D.D."/>
            <person name="White J.D."/>
            <person name="Wiley G.B."/>
            <person name="Wincker P."/>
            <person name="Xing Y."/>
            <person name="Yang L."/>
            <person name="Yao Z."/>
            <person name="Ying F."/>
            <person name="Zhai J."/>
            <person name="Zhou L."/>
            <person name="Zuber A."/>
            <person name="Denarie J."/>
            <person name="Dixon R.A."/>
            <person name="May G.D."/>
            <person name="Schwartz D.C."/>
            <person name="Rogers J."/>
            <person name="Quetier F."/>
            <person name="Town C.D."/>
            <person name="Roe B.A."/>
        </authorList>
    </citation>
    <scope>NUCLEOTIDE SEQUENCE [LARGE SCALE GENOMIC DNA]</scope>
    <source>
        <strain>cv. Jemalong A17</strain>
    </source>
</reference>
<reference key="2">
    <citation type="journal article" date="2014" name="BMC Genomics">
        <title>An improved genome release (version Mt4.0) for the model legume Medicago truncatula.</title>
        <authorList>
            <person name="Tang H."/>
            <person name="Krishnakumar V."/>
            <person name="Bidwell S."/>
            <person name="Rosen B."/>
            <person name="Chan A."/>
            <person name="Zhou S."/>
            <person name="Gentzbittel L."/>
            <person name="Childs K.L."/>
            <person name="Yandell M."/>
            <person name="Gundlach H."/>
            <person name="Mayer K.F."/>
            <person name="Schwartz D.C."/>
            <person name="Town C.D."/>
        </authorList>
    </citation>
    <scope>GENOME REANNOTATION</scope>
    <source>
        <strain>cv. Jemalong A17</strain>
    </source>
</reference>
<reference key="3">
    <citation type="journal article" date="2014" name="Plant Physiol.">
        <title>Functional and evolutionary analysis of the CASPARIAN STRIP MEMBRANE DOMAIN PROTEIN family.</title>
        <authorList>
            <person name="Roppolo D."/>
            <person name="Boeckmann B."/>
            <person name="Pfister A."/>
            <person name="Boutet E."/>
            <person name="Rubio M.C."/>
            <person name="Denervaud-Tendon V."/>
            <person name="Vermeer J.E."/>
            <person name="Gheyselinck J."/>
            <person name="Xenarios I."/>
            <person name="Geldner N."/>
        </authorList>
    </citation>
    <scope>GENE FAMILY</scope>
    <scope>NOMENCLATURE</scope>
</reference>
<protein>
    <recommendedName>
        <fullName>Casparian strip membrane protein 1</fullName>
        <shortName>MtCASP1</shortName>
    </recommendedName>
</protein>
<dbReference type="EMBL" id="CM001221">
    <property type="protein sequence ID" value="AES96820.1"/>
    <property type="molecule type" value="Genomic_DNA"/>
</dbReference>
<dbReference type="SMR" id="G7KGQ4"/>
<dbReference type="STRING" id="3880.G7KGQ4"/>
<dbReference type="PaxDb" id="3880-AES96820"/>
<dbReference type="EnsemblPlants" id="rna30617">
    <property type="protein sequence ID" value="RHN55437.1"/>
    <property type="gene ID" value="gene30617"/>
</dbReference>
<dbReference type="Gramene" id="rna30617">
    <property type="protein sequence ID" value="RHN55437.1"/>
    <property type="gene ID" value="gene30617"/>
</dbReference>
<dbReference type="KEGG" id="mtr:11414000"/>
<dbReference type="eggNOG" id="ENOG502RXTK">
    <property type="taxonomic scope" value="Eukaryota"/>
</dbReference>
<dbReference type="HOGENOM" id="CLU_066104_3_2_1"/>
<dbReference type="OMA" id="VNWFAIC"/>
<dbReference type="OrthoDB" id="753675at2759"/>
<dbReference type="Proteomes" id="UP000002051">
    <property type="component" value="Chromosome 5"/>
</dbReference>
<dbReference type="GO" id="GO:0005886">
    <property type="term" value="C:plasma membrane"/>
    <property type="evidence" value="ECO:0000318"/>
    <property type="project" value="GO_Central"/>
</dbReference>
<dbReference type="GO" id="GO:0042545">
    <property type="term" value="P:cell wall modification"/>
    <property type="evidence" value="ECO:0000318"/>
    <property type="project" value="GO_Central"/>
</dbReference>
<dbReference type="GO" id="GO:0007043">
    <property type="term" value="P:cell-cell junction assembly"/>
    <property type="evidence" value="ECO:0000318"/>
    <property type="project" value="GO_Central"/>
</dbReference>
<dbReference type="InterPro" id="IPR006459">
    <property type="entry name" value="CASP/CASPL"/>
</dbReference>
<dbReference type="InterPro" id="IPR006702">
    <property type="entry name" value="CASP_dom"/>
</dbReference>
<dbReference type="InterPro" id="IPR044173">
    <property type="entry name" value="CASPL"/>
</dbReference>
<dbReference type="NCBIfam" id="TIGR01569">
    <property type="entry name" value="A_tha_TIGR01569"/>
    <property type="match status" value="1"/>
</dbReference>
<dbReference type="PANTHER" id="PTHR36488:SF12">
    <property type="entry name" value="CASP-LIKE PROTEIN"/>
    <property type="match status" value="1"/>
</dbReference>
<dbReference type="PANTHER" id="PTHR36488">
    <property type="entry name" value="CASP-LIKE PROTEIN 1U1"/>
    <property type="match status" value="1"/>
</dbReference>
<dbReference type="Pfam" id="PF04535">
    <property type="entry name" value="CASP_dom"/>
    <property type="match status" value="1"/>
</dbReference>
<sequence>MKGGSIELGEVSKNASTNKGVKRGLSIMDFILRIIAGVATLASAVAMGTTDERLPFATSFVQFRAEYDDLPSFVFFVLANSIVCGYLALSLILSILHIVRSTAVKSRILLIVLDMVMMGLLAAAASAAASIVYIAHYGNTQANWFPICQQYNSFCERISGSLIGSYIAVALFIIIILLSQSAISRN</sequence>
<proteinExistence type="inferred from homology"/>
<name>CASP1_MEDTR</name>
<accession>G7KGQ4</accession>
<feature type="chain" id="PRO_0000417781" description="Casparian strip membrane protein 1">
    <location>
        <begin position="1"/>
        <end position="186"/>
    </location>
</feature>
<feature type="topological domain" description="Cytoplasmic" evidence="2">
    <location>
        <begin position="1"/>
        <end position="26"/>
    </location>
</feature>
<feature type="transmembrane region" description="Helical" evidence="2">
    <location>
        <begin position="27"/>
        <end position="47"/>
    </location>
</feature>
<feature type="topological domain" description="Extracellular" evidence="2">
    <location>
        <begin position="48"/>
        <end position="72"/>
    </location>
</feature>
<feature type="transmembrane region" description="Helical" evidence="2">
    <location>
        <begin position="73"/>
        <end position="93"/>
    </location>
</feature>
<feature type="topological domain" description="Cytoplasmic" evidence="2">
    <location>
        <begin position="94"/>
        <end position="107"/>
    </location>
</feature>
<feature type="transmembrane region" description="Helical" evidence="2">
    <location>
        <begin position="108"/>
        <end position="128"/>
    </location>
</feature>
<feature type="topological domain" description="Extracellular" evidence="2">
    <location>
        <begin position="129"/>
        <end position="157"/>
    </location>
</feature>
<feature type="transmembrane region" description="Helical" evidence="2">
    <location>
        <begin position="158"/>
        <end position="178"/>
    </location>
</feature>
<feature type="topological domain" description="Cytoplasmic" evidence="2">
    <location>
        <begin position="179"/>
        <end position="186"/>
    </location>
</feature>
<gene>
    <name type="ordered locus">MTR_5g041900</name>
</gene>
<evidence type="ECO:0000250" key="1"/>
<evidence type="ECO:0000255" key="2"/>
<evidence type="ECO:0000305" key="3"/>
<organism>
    <name type="scientific">Medicago truncatula</name>
    <name type="common">Barrel medic</name>
    <name type="synonym">Medicago tribuloides</name>
    <dbReference type="NCBI Taxonomy" id="3880"/>
    <lineage>
        <taxon>Eukaryota</taxon>
        <taxon>Viridiplantae</taxon>
        <taxon>Streptophyta</taxon>
        <taxon>Embryophyta</taxon>
        <taxon>Tracheophyta</taxon>
        <taxon>Spermatophyta</taxon>
        <taxon>Magnoliopsida</taxon>
        <taxon>eudicotyledons</taxon>
        <taxon>Gunneridae</taxon>
        <taxon>Pentapetalae</taxon>
        <taxon>rosids</taxon>
        <taxon>fabids</taxon>
        <taxon>Fabales</taxon>
        <taxon>Fabaceae</taxon>
        <taxon>Papilionoideae</taxon>
        <taxon>50 kb inversion clade</taxon>
        <taxon>NPAAA clade</taxon>
        <taxon>Hologalegina</taxon>
        <taxon>IRL clade</taxon>
        <taxon>Trifolieae</taxon>
        <taxon>Medicago</taxon>
    </lineage>
</organism>
<keyword id="KW-1003">Cell membrane</keyword>
<keyword id="KW-0961">Cell wall biogenesis/degradation</keyword>
<keyword id="KW-0472">Membrane</keyword>
<keyword id="KW-1185">Reference proteome</keyword>
<keyword id="KW-0812">Transmembrane</keyword>
<keyword id="KW-1133">Transmembrane helix</keyword>